<sequence length="473" mass="53966">MASAKEDNKHQGVGIVGAGLVGCLTALAFAAKGFSVTLFELRPDPKKVTNEKNLRSINLAVSDRGIRTLKYVDSEMADRVLEHVIPMTGRMIHDLSGTKQESQAYGLFGESINSIDRSFLNDYLLDEIRHSDINVHFNHKLIRLDDLSSEEKSPKLTFLDTSESNESTMKSYEFDYVIGADGAHSQFRYQLQKSMRMNISQEYIDMQYLELSIPPNTTGDSKFHIDPNHLHIWPRHEFMLIALANEDGSFTSTFFSPWSVIESFGTSSDKFIDFFKYNFPDAFKLMGEKKLRYAFENQPRGSLMQVNAYPYHNPNGRALIIGDAAHSMVPFYGQGMNCGFEDIRVLMELIDKNNGEVSESFRQYSVLRAEDLQTISKLALDNYHEMSSKVTNVWYLFRKKIDNMLGRYGNGLFQWIPMYTMISFRGDIPYSKAIKIEKRQTKILNAIEVGTLTGFILFGAAKLAQHYHKLSNK</sequence>
<dbReference type="EC" id="1.14.13.9" evidence="1"/>
<dbReference type="EMBL" id="CR382135">
    <property type="protein sequence ID" value="CAG86004.2"/>
    <property type="molecule type" value="Genomic_DNA"/>
</dbReference>
<dbReference type="RefSeq" id="XP_457948.2">
    <property type="nucleotide sequence ID" value="XM_457948.1"/>
</dbReference>
<dbReference type="SMR" id="Q6BV21"/>
<dbReference type="FunCoup" id="Q6BV21">
    <property type="interactions" value="809"/>
</dbReference>
<dbReference type="STRING" id="284592.Q6BV21"/>
<dbReference type="GeneID" id="2899991"/>
<dbReference type="KEGG" id="dha:DEHA2C05984g"/>
<dbReference type="VEuPathDB" id="FungiDB:DEHA2C05984g"/>
<dbReference type="eggNOG" id="KOG2614">
    <property type="taxonomic scope" value="Eukaryota"/>
</dbReference>
<dbReference type="HOGENOM" id="CLU_023210_0_1_1"/>
<dbReference type="InParanoid" id="Q6BV21"/>
<dbReference type="OMA" id="REFMFIA"/>
<dbReference type="OrthoDB" id="10053569at2759"/>
<dbReference type="UniPathway" id="UPA00253">
    <property type="reaction ID" value="UER00328"/>
</dbReference>
<dbReference type="Proteomes" id="UP000000599">
    <property type="component" value="Chromosome C"/>
</dbReference>
<dbReference type="GO" id="GO:0005741">
    <property type="term" value="C:mitochondrial outer membrane"/>
    <property type="evidence" value="ECO:0007669"/>
    <property type="project" value="UniProtKB-SubCell"/>
</dbReference>
<dbReference type="GO" id="GO:0005777">
    <property type="term" value="C:peroxisome"/>
    <property type="evidence" value="ECO:0007669"/>
    <property type="project" value="EnsemblFungi"/>
</dbReference>
<dbReference type="GO" id="GO:0071949">
    <property type="term" value="F:FAD binding"/>
    <property type="evidence" value="ECO:0007669"/>
    <property type="project" value="EnsemblFungi"/>
</dbReference>
<dbReference type="GO" id="GO:0004502">
    <property type="term" value="F:kynurenine 3-monooxygenase activity"/>
    <property type="evidence" value="ECO:0007669"/>
    <property type="project" value="UniProtKB-UniRule"/>
</dbReference>
<dbReference type="GO" id="GO:0016174">
    <property type="term" value="F:NAD(P)H oxidase H2O2-forming activity"/>
    <property type="evidence" value="ECO:0007669"/>
    <property type="project" value="EnsemblFungi"/>
</dbReference>
<dbReference type="GO" id="GO:0034354">
    <property type="term" value="P:'de novo' NAD biosynthetic process from L-tryptophan"/>
    <property type="evidence" value="ECO:0007669"/>
    <property type="project" value="UniProtKB-UniRule"/>
</dbReference>
<dbReference type="GO" id="GO:0043420">
    <property type="term" value="P:anthranilate metabolic process"/>
    <property type="evidence" value="ECO:0007669"/>
    <property type="project" value="UniProtKB-UniRule"/>
</dbReference>
<dbReference type="GO" id="GO:0070189">
    <property type="term" value="P:kynurenine metabolic process"/>
    <property type="evidence" value="ECO:0007669"/>
    <property type="project" value="EnsemblFungi"/>
</dbReference>
<dbReference type="GO" id="GO:0006569">
    <property type="term" value="P:L-tryptophan catabolic process"/>
    <property type="evidence" value="ECO:0007669"/>
    <property type="project" value="UniProtKB-UniRule"/>
</dbReference>
<dbReference type="GO" id="GO:0019805">
    <property type="term" value="P:quinolinate biosynthetic process"/>
    <property type="evidence" value="ECO:0007669"/>
    <property type="project" value="UniProtKB-UniRule"/>
</dbReference>
<dbReference type="FunFam" id="3.50.50.60:FF:000129">
    <property type="entry name" value="Kynurenine 3-monooxygenase"/>
    <property type="match status" value="1"/>
</dbReference>
<dbReference type="Gene3D" id="3.50.50.60">
    <property type="entry name" value="FAD/NAD(P)-binding domain"/>
    <property type="match status" value="1"/>
</dbReference>
<dbReference type="HAMAP" id="MF_01971">
    <property type="entry name" value="Kynurenine_monooxygenase"/>
    <property type="match status" value="1"/>
</dbReference>
<dbReference type="InterPro" id="IPR002938">
    <property type="entry name" value="FAD-bd"/>
</dbReference>
<dbReference type="InterPro" id="IPR036188">
    <property type="entry name" value="FAD/NAD-bd_sf"/>
</dbReference>
<dbReference type="InterPro" id="IPR027545">
    <property type="entry name" value="Kynurenine_monooxygenase"/>
</dbReference>
<dbReference type="PANTHER" id="PTHR46028">
    <property type="entry name" value="KYNURENINE 3-MONOOXYGENASE"/>
    <property type="match status" value="1"/>
</dbReference>
<dbReference type="PANTHER" id="PTHR46028:SF2">
    <property type="entry name" value="KYNURENINE 3-MONOOXYGENASE"/>
    <property type="match status" value="1"/>
</dbReference>
<dbReference type="Pfam" id="PF01494">
    <property type="entry name" value="FAD_binding_3"/>
    <property type="match status" value="1"/>
</dbReference>
<dbReference type="PRINTS" id="PR00420">
    <property type="entry name" value="RNGMNOXGNASE"/>
</dbReference>
<dbReference type="SUPFAM" id="SSF51905">
    <property type="entry name" value="FAD/NAD(P)-binding domain"/>
    <property type="match status" value="1"/>
</dbReference>
<organism>
    <name type="scientific">Debaryomyces hansenii (strain ATCC 36239 / CBS 767 / BCRC 21394 / JCM 1990 / NBRC 0083 / IGC 2968)</name>
    <name type="common">Yeast</name>
    <name type="synonym">Torulaspora hansenii</name>
    <dbReference type="NCBI Taxonomy" id="284592"/>
    <lineage>
        <taxon>Eukaryota</taxon>
        <taxon>Fungi</taxon>
        <taxon>Dikarya</taxon>
        <taxon>Ascomycota</taxon>
        <taxon>Saccharomycotina</taxon>
        <taxon>Pichiomycetes</taxon>
        <taxon>Debaryomycetaceae</taxon>
        <taxon>Debaryomyces</taxon>
    </lineage>
</organism>
<accession>Q6BV21</accession>
<evidence type="ECO:0000255" key="1">
    <source>
        <dbReference type="HAMAP-Rule" id="MF_03018"/>
    </source>
</evidence>
<gene>
    <name evidence="1" type="primary">BNA4</name>
    <name type="ordered locus">DEHA2C05984g</name>
</gene>
<keyword id="KW-0274">FAD</keyword>
<keyword id="KW-0285">Flavoprotein</keyword>
<keyword id="KW-0472">Membrane</keyword>
<keyword id="KW-0496">Mitochondrion</keyword>
<keyword id="KW-1000">Mitochondrion outer membrane</keyword>
<keyword id="KW-0503">Monooxygenase</keyword>
<keyword id="KW-0521">NADP</keyword>
<keyword id="KW-0560">Oxidoreductase</keyword>
<keyword id="KW-0662">Pyridine nucleotide biosynthesis</keyword>
<keyword id="KW-1185">Reference proteome</keyword>
<feature type="chain" id="PRO_0000361927" description="Kynurenine 3-monooxygenase">
    <location>
        <begin position="1"/>
        <end position="473"/>
    </location>
</feature>
<comment type="function">
    <text evidence="1">Catalyzes the hydroxylation of L-kynurenine (L-Kyn) to form 3-hydroxy-L-kynurenine (L-3OHKyn). Required for synthesis of quinolinic acid.</text>
</comment>
<comment type="catalytic activity">
    <reaction evidence="1">
        <text>L-kynurenine + NADPH + O2 + H(+) = 3-hydroxy-L-kynurenine + NADP(+) + H2O</text>
        <dbReference type="Rhea" id="RHEA:20545"/>
        <dbReference type="ChEBI" id="CHEBI:15377"/>
        <dbReference type="ChEBI" id="CHEBI:15378"/>
        <dbReference type="ChEBI" id="CHEBI:15379"/>
        <dbReference type="ChEBI" id="CHEBI:57783"/>
        <dbReference type="ChEBI" id="CHEBI:57959"/>
        <dbReference type="ChEBI" id="CHEBI:58125"/>
        <dbReference type="ChEBI" id="CHEBI:58349"/>
        <dbReference type="EC" id="1.14.13.9"/>
    </reaction>
</comment>
<comment type="cofactor">
    <cofactor evidence="1">
        <name>FAD</name>
        <dbReference type="ChEBI" id="CHEBI:57692"/>
    </cofactor>
</comment>
<comment type="pathway">
    <text evidence="1">Cofactor biosynthesis; NAD(+) biosynthesis; quinolinate from L-kynurenine: step 1/3.</text>
</comment>
<comment type="subcellular location">
    <subcellularLocation>
        <location evidence="1">Mitochondrion outer membrane</location>
    </subcellularLocation>
</comment>
<comment type="similarity">
    <text evidence="1">Belongs to the aromatic-ring hydroxylase family. KMO subfamily.</text>
</comment>
<name>KMO_DEBHA</name>
<reference key="1">
    <citation type="journal article" date="2004" name="Nature">
        <title>Genome evolution in yeasts.</title>
        <authorList>
            <person name="Dujon B."/>
            <person name="Sherman D."/>
            <person name="Fischer G."/>
            <person name="Durrens P."/>
            <person name="Casaregola S."/>
            <person name="Lafontaine I."/>
            <person name="de Montigny J."/>
            <person name="Marck C."/>
            <person name="Neuveglise C."/>
            <person name="Talla E."/>
            <person name="Goffard N."/>
            <person name="Frangeul L."/>
            <person name="Aigle M."/>
            <person name="Anthouard V."/>
            <person name="Babour A."/>
            <person name="Barbe V."/>
            <person name="Barnay S."/>
            <person name="Blanchin S."/>
            <person name="Beckerich J.-M."/>
            <person name="Beyne E."/>
            <person name="Bleykasten C."/>
            <person name="Boisrame A."/>
            <person name="Boyer J."/>
            <person name="Cattolico L."/>
            <person name="Confanioleri F."/>
            <person name="de Daruvar A."/>
            <person name="Despons L."/>
            <person name="Fabre E."/>
            <person name="Fairhead C."/>
            <person name="Ferry-Dumazet H."/>
            <person name="Groppi A."/>
            <person name="Hantraye F."/>
            <person name="Hennequin C."/>
            <person name="Jauniaux N."/>
            <person name="Joyet P."/>
            <person name="Kachouri R."/>
            <person name="Kerrest A."/>
            <person name="Koszul R."/>
            <person name="Lemaire M."/>
            <person name="Lesur I."/>
            <person name="Ma L."/>
            <person name="Muller H."/>
            <person name="Nicaud J.-M."/>
            <person name="Nikolski M."/>
            <person name="Oztas S."/>
            <person name="Ozier-Kalogeropoulos O."/>
            <person name="Pellenz S."/>
            <person name="Potier S."/>
            <person name="Richard G.-F."/>
            <person name="Straub M.-L."/>
            <person name="Suleau A."/>
            <person name="Swennen D."/>
            <person name="Tekaia F."/>
            <person name="Wesolowski-Louvel M."/>
            <person name="Westhof E."/>
            <person name="Wirth B."/>
            <person name="Zeniou-Meyer M."/>
            <person name="Zivanovic Y."/>
            <person name="Bolotin-Fukuhara M."/>
            <person name="Thierry A."/>
            <person name="Bouchier C."/>
            <person name="Caudron B."/>
            <person name="Scarpelli C."/>
            <person name="Gaillardin C."/>
            <person name="Weissenbach J."/>
            <person name="Wincker P."/>
            <person name="Souciet J.-L."/>
        </authorList>
    </citation>
    <scope>NUCLEOTIDE SEQUENCE [LARGE SCALE GENOMIC DNA]</scope>
    <source>
        <strain>ATCC 36239 / CBS 767 / BCRC 21394 / JCM 1990 / NBRC 0083 / IGC 2968</strain>
    </source>
</reference>
<proteinExistence type="inferred from homology"/>
<protein>
    <recommendedName>
        <fullName evidence="1">Kynurenine 3-monooxygenase</fullName>
        <ecNumber evidence="1">1.14.13.9</ecNumber>
    </recommendedName>
    <alternativeName>
        <fullName evidence="1">Biosynthesis of nicotinic acid protein 4</fullName>
    </alternativeName>
    <alternativeName>
        <fullName evidence="1">Kynurenine 3-hydroxylase</fullName>
    </alternativeName>
</protein>